<protein>
    <recommendedName>
        <fullName>Fructose-1,6-bisphosphatase/inositol-1-monophosphatase</fullName>
        <shortName>FBPase/IMPase</shortName>
        <ecNumber evidence="2">3.1.3.11</ecNumber>
        <ecNumber evidence="2">3.1.3.25</ecNumber>
    </recommendedName>
    <alternativeName>
        <fullName>Inositol-1-phosphatase</fullName>
        <shortName>I-1-Pase</shortName>
    </alternativeName>
</protein>
<organism>
    <name type="scientific">Aquifex aeolicus (strain VF5)</name>
    <dbReference type="NCBI Taxonomy" id="224324"/>
    <lineage>
        <taxon>Bacteria</taxon>
        <taxon>Pseudomonadati</taxon>
        <taxon>Aquificota</taxon>
        <taxon>Aquificia</taxon>
        <taxon>Aquificales</taxon>
        <taxon>Aquificaceae</taxon>
        <taxon>Aquifex</taxon>
    </lineage>
</organism>
<comment type="function">
    <text evidence="2">Phosphatase with broad specificity; it can dephosphorylate fructose 1,6-bisphosphate, and both D and L isomers of inositol-1-phosphate (I-1-P).</text>
</comment>
<comment type="catalytic activity">
    <reaction evidence="2">
        <text>beta-D-fructose 1,6-bisphosphate + H2O = beta-D-fructose 6-phosphate + phosphate</text>
        <dbReference type="Rhea" id="RHEA:11064"/>
        <dbReference type="ChEBI" id="CHEBI:15377"/>
        <dbReference type="ChEBI" id="CHEBI:32966"/>
        <dbReference type="ChEBI" id="CHEBI:43474"/>
        <dbReference type="ChEBI" id="CHEBI:57634"/>
        <dbReference type="EC" id="3.1.3.11"/>
    </reaction>
</comment>
<comment type="catalytic activity">
    <reaction evidence="2">
        <text>a myo-inositol phosphate + H2O = myo-inositol + phosphate</text>
        <dbReference type="Rhea" id="RHEA:24056"/>
        <dbReference type="ChEBI" id="CHEBI:15377"/>
        <dbReference type="ChEBI" id="CHEBI:17268"/>
        <dbReference type="ChEBI" id="CHEBI:43474"/>
        <dbReference type="ChEBI" id="CHEBI:84139"/>
        <dbReference type="EC" id="3.1.3.25"/>
    </reaction>
</comment>
<comment type="cofactor">
    <cofactor evidence="1">
        <name>Mg(2+)</name>
        <dbReference type="ChEBI" id="CHEBI:18420"/>
    </cofactor>
</comment>
<comment type="similarity">
    <text evidence="3">Belongs to the inositol monophosphatase superfamily. FBPase class 4 family.</text>
</comment>
<reference key="1">
    <citation type="journal article" date="1998" name="Nature">
        <title>The complete genome of the hyperthermophilic bacterium Aquifex aeolicus.</title>
        <authorList>
            <person name="Deckert G."/>
            <person name="Warren P.V."/>
            <person name="Gaasterland T."/>
            <person name="Young W.G."/>
            <person name="Lenox A.L."/>
            <person name="Graham D.E."/>
            <person name="Overbeek R."/>
            <person name="Snead M.A."/>
            <person name="Keller M."/>
            <person name="Aujay M."/>
            <person name="Huber R."/>
            <person name="Feldman R.A."/>
            <person name="Short J.M."/>
            <person name="Olsen G.J."/>
            <person name="Swanson R.V."/>
        </authorList>
    </citation>
    <scope>NUCLEOTIDE SEQUENCE [LARGE SCALE GENOMIC DNA]</scope>
    <source>
        <strain>VF5</strain>
    </source>
</reference>
<reference key="2">
    <citation type="submission" date="2009-02" db="PDB data bank">
        <title>Crystal structure of myo-inositol-1(or 4)-monophosphatase (aq_1983) from Aquifex aeolicus VF5.</title>
        <authorList>
            <consortium name="RIKEN structural genomics initiative (RSGI)"/>
        </authorList>
    </citation>
    <scope>X-RAY CRYSTALLOGRAPHY (2.6 ANGSTROMS)</scope>
</reference>
<dbReference type="EC" id="3.1.3.11" evidence="2"/>
<dbReference type="EC" id="3.1.3.25" evidence="2"/>
<dbReference type="EMBL" id="AE000657">
    <property type="protein sequence ID" value="AAC07753.1"/>
    <property type="molecule type" value="Genomic_DNA"/>
</dbReference>
<dbReference type="PIR" id="C70470">
    <property type="entry name" value="C70470"/>
</dbReference>
<dbReference type="RefSeq" id="NP_214360.1">
    <property type="nucleotide sequence ID" value="NC_000918.1"/>
</dbReference>
<dbReference type="RefSeq" id="WP_010881296.1">
    <property type="nucleotide sequence ID" value="NC_000918.1"/>
</dbReference>
<dbReference type="PDB" id="2PCR">
    <property type="method" value="X-ray"/>
    <property type="resolution" value="2.60 A"/>
    <property type="chains" value="A/B/C/D=1-264"/>
</dbReference>
<dbReference type="PDBsum" id="2PCR"/>
<dbReference type="SMR" id="O67791"/>
<dbReference type="FunCoup" id="O67791">
    <property type="interactions" value="397"/>
</dbReference>
<dbReference type="STRING" id="224324.aq_1983"/>
<dbReference type="EnsemblBacteria" id="AAC07753">
    <property type="protein sequence ID" value="AAC07753"/>
    <property type="gene ID" value="aq_1983"/>
</dbReference>
<dbReference type="KEGG" id="aae:aq_1983"/>
<dbReference type="PATRIC" id="fig|224324.8.peg.1533"/>
<dbReference type="eggNOG" id="COG0483">
    <property type="taxonomic scope" value="Bacteria"/>
</dbReference>
<dbReference type="HOGENOM" id="CLU_044118_0_4_0"/>
<dbReference type="InParanoid" id="O67791"/>
<dbReference type="OrthoDB" id="9772456at2"/>
<dbReference type="EvolutionaryTrace" id="O67791"/>
<dbReference type="Proteomes" id="UP000000798">
    <property type="component" value="Chromosome"/>
</dbReference>
<dbReference type="GO" id="GO:0042132">
    <property type="term" value="F:fructose 1,6-bisphosphate 1-phosphatase activity"/>
    <property type="evidence" value="ECO:0007669"/>
    <property type="project" value="UniProtKB-EC"/>
</dbReference>
<dbReference type="GO" id="GO:0008934">
    <property type="term" value="F:inositol monophosphate 1-phosphatase activity"/>
    <property type="evidence" value="ECO:0000318"/>
    <property type="project" value="GO_Central"/>
</dbReference>
<dbReference type="GO" id="GO:0046872">
    <property type="term" value="F:metal ion binding"/>
    <property type="evidence" value="ECO:0007669"/>
    <property type="project" value="UniProtKB-KW"/>
</dbReference>
<dbReference type="GO" id="GO:0006020">
    <property type="term" value="P:inositol metabolic process"/>
    <property type="evidence" value="ECO:0000318"/>
    <property type="project" value="GO_Central"/>
</dbReference>
<dbReference type="GO" id="GO:0007165">
    <property type="term" value="P:signal transduction"/>
    <property type="evidence" value="ECO:0000318"/>
    <property type="project" value="GO_Central"/>
</dbReference>
<dbReference type="CDD" id="cd01639">
    <property type="entry name" value="IMPase"/>
    <property type="match status" value="1"/>
</dbReference>
<dbReference type="FunFam" id="3.30.540.10:FF:000003">
    <property type="entry name" value="Inositol-1-monophosphatase"/>
    <property type="match status" value="1"/>
</dbReference>
<dbReference type="Gene3D" id="3.40.190.80">
    <property type="match status" value="1"/>
</dbReference>
<dbReference type="Gene3D" id="3.30.540.10">
    <property type="entry name" value="Fructose-1,6-Bisphosphatase, subunit A, domain 1"/>
    <property type="match status" value="1"/>
</dbReference>
<dbReference type="InterPro" id="IPR033942">
    <property type="entry name" value="IMPase"/>
</dbReference>
<dbReference type="InterPro" id="IPR020583">
    <property type="entry name" value="Inositol_monoP_metal-BS"/>
</dbReference>
<dbReference type="InterPro" id="IPR000760">
    <property type="entry name" value="Inositol_monophosphatase-like"/>
</dbReference>
<dbReference type="InterPro" id="IPR022337">
    <property type="entry name" value="Inositol_monophosphatase_SuhB"/>
</dbReference>
<dbReference type="PANTHER" id="PTHR20854">
    <property type="entry name" value="INOSITOL MONOPHOSPHATASE"/>
    <property type="match status" value="1"/>
</dbReference>
<dbReference type="PANTHER" id="PTHR20854:SF4">
    <property type="entry name" value="INOSITOL-1-MONOPHOSPHATASE-RELATED"/>
    <property type="match status" value="1"/>
</dbReference>
<dbReference type="Pfam" id="PF00459">
    <property type="entry name" value="Inositol_P"/>
    <property type="match status" value="1"/>
</dbReference>
<dbReference type="PRINTS" id="PR00377">
    <property type="entry name" value="IMPHPHTASES"/>
</dbReference>
<dbReference type="PRINTS" id="PR01959">
    <property type="entry name" value="SBIMPHPHTASE"/>
</dbReference>
<dbReference type="SUPFAM" id="SSF56655">
    <property type="entry name" value="Carbohydrate phosphatase"/>
    <property type="match status" value="1"/>
</dbReference>
<dbReference type="PROSITE" id="PS00629">
    <property type="entry name" value="IMP_1"/>
    <property type="match status" value="1"/>
</dbReference>
<feature type="chain" id="PRO_0000142553" description="Fructose-1,6-bisphosphatase/inositol-1-monophosphatase">
    <location>
        <begin position="1"/>
        <end position="264"/>
    </location>
</feature>
<feature type="binding site" evidence="1">
    <location>
        <position position="70"/>
    </location>
    <ligand>
        <name>Mg(2+)</name>
        <dbReference type="ChEBI" id="CHEBI:18420"/>
        <label>1</label>
    </ligand>
</feature>
<feature type="binding site" evidence="1">
    <location>
        <position position="86"/>
    </location>
    <ligand>
        <name>Mg(2+)</name>
        <dbReference type="ChEBI" id="CHEBI:18420"/>
        <label>1</label>
    </ligand>
</feature>
<feature type="binding site" evidence="1">
    <location>
        <position position="86"/>
    </location>
    <ligand>
        <name>Mg(2+)</name>
        <dbReference type="ChEBI" id="CHEBI:18420"/>
        <label>2</label>
    </ligand>
</feature>
<feature type="binding site" evidence="1">
    <location>
        <position position="88"/>
    </location>
    <ligand>
        <name>Mg(2+)</name>
        <dbReference type="ChEBI" id="CHEBI:18420"/>
        <label>1</label>
    </ligand>
</feature>
<feature type="binding site" evidence="1">
    <location>
        <begin position="89"/>
        <end position="91"/>
    </location>
    <ligand>
        <name>substrate</name>
    </ligand>
</feature>
<feature type="binding site" evidence="1">
    <location>
        <position position="89"/>
    </location>
    <ligand>
        <name>Mg(2+)</name>
        <dbReference type="ChEBI" id="CHEBI:18420"/>
        <label>2</label>
    </ligand>
</feature>
<feature type="binding site" evidence="1">
    <location>
        <position position="185"/>
    </location>
    <ligand>
        <name>substrate</name>
    </ligand>
</feature>
<feature type="binding site" evidence="1">
    <location>
        <position position="190"/>
    </location>
    <ligand>
        <name>substrate</name>
    </ligand>
</feature>
<feature type="binding site" evidence="1">
    <location>
        <position position="214"/>
    </location>
    <ligand>
        <name>Mg(2+)</name>
        <dbReference type="ChEBI" id="CHEBI:18420"/>
        <label>2</label>
    </ligand>
</feature>
<feature type="helix" evidence="4">
    <location>
        <begin position="4"/>
        <end position="25"/>
    </location>
</feature>
<feature type="helix" evidence="4">
    <location>
        <begin position="45"/>
        <end position="61"/>
    </location>
</feature>
<feature type="strand" evidence="4">
    <location>
        <begin position="65"/>
        <end position="68"/>
    </location>
</feature>
<feature type="strand" evidence="4">
    <location>
        <begin position="81"/>
        <end position="89"/>
    </location>
</feature>
<feature type="helix" evidence="4">
    <location>
        <begin position="91"/>
        <end position="96"/>
    </location>
</feature>
<feature type="strand" evidence="4">
    <location>
        <begin position="102"/>
        <end position="109"/>
    </location>
</feature>
<feature type="strand" evidence="4">
    <location>
        <begin position="112"/>
        <end position="120"/>
    </location>
</feature>
<feature type="turn" evidence="4">
    <location>
        <begin position="121"/>
        <end position="124"/>
    </location>
</feature>
<feature type="strand" evidence="4">
    <location>
        <begin position="125"/>
        <end position="130"/>
    </location>
</feature>
<feature type="turn" evidence="4">
    <location>
        <begin position="131"/>
        <end position="133"/>
    </location>
</feature>
<feature type="strand" evidence="4">
    <location>
        <begin position="134"/>
        <end position="137"/>
    </location>
</feature>
<feature type="strand" evidence="4">
    <location>
        <begin position="140"/>
        <end position="142"/>
    </location>
</feature>
<feature type="helix" evidence="4">
    <location>
        <begin position="150"/>
        <end position="152"/>
    </location>
</feature>
<feature type="strand" evidence="4">
    <location>
        <begin position="154"/>
        <end position="158"/>
    </location>
</feature>
<feature type="helix" evidence="4">
    <location>
        <begin position="167"/>
        <end position="180"/>
    </location>
</feature>
<feature type="strand" evidence="4">
    <location>
        <begin position="181"/>
        <end position="186"/>
    </location>
</feature>
<feature type="helix" evidence="4">
    <location>
        <begin position="190"/>
        <end position="198"/>
    </location>
</feature>
<feature type="strand" evidence="4">
    <location>
        <begin position="201"/>
        <end position="210"/>
    </location>
</feature>
<feature type="helix" evidence="4">
    <location>
        <begin position="212"/>
        <end position="224"/>
    </location>
</feature>
<feature type="strand" evidence="4">
    <location>
        <begin position="228"/>
        <end position="233"/>
    </location>
</feature>
<feature type="strand" evidence="4">
    <location>
        <begin position="237"/>
        <end position="245"/>
    </location>
</feature>
<feature type="helix" evidence="4">
    <location>
        <begin position="246"/>
        <end position="259"/>
    </location>
</feature>
<sequence length="264" mass="29336">MENLKKYLEVAKIAALAGGQVLKENFGKVKKENIEEKGEKDFVSYVDKTSEERIKEVILKFFPDHEVVGEEMGAEGSGSEYRWFIDPLDGTKNYINGFPIFAVSVGLVKGEEPIVGAVYLPYFDKLYWGAKGLGAYVNGKRIKVKDNESLKHAGVVYGFPSRSRRDISIYLNIFKDVFYEVGSMRRPGAAAVDLCMVAEGIFDGMMEFEMKPWDITAGLVILKEAGGVYTLVGEPFGVSDIIAGNKALHDFILQVAKKYMEVAV</sequence>
<keyword id="KW-0002">3D-structure</keyword>
<keyword id="KW-0119">Carbohydrate metabolism</keyword>
<keyword id="KW-0378">Hydrolase</keyword>
<keyword id="KW-0460">Magnesium</keyword>
<keyword id="KW-0479">Metal-binding</keyword>
<keyword id="KW-1185">Reference proteome</keyword>
<evidence type="ECO:0000250" key="1"/>
<evidence type="ECO:0000250" key="2">
    <source>
        <dbReference type="UniProtKB" id="Q57573"/>
    </source>
</evidence>
<evidence type="ECO:0000305" key="3"/>
<evidence type="ECO:0007829" key="4">
    <source>
        <dbReference type="PDB" id="2PCR"/>
    </source>
</evidence>
<gene>
    <name type="primary">suhB</name>
    <name type="synonym">imp2</name>
    <name type="ordered locus">aq_1983</name>
</gene>
<accession>O67791</accession>
<name>BSUHB_AQUAE</name>
<proteinExistence type="evidence at protein level"/>